<evidence type="ECO:0000269" key="1">
    <source>
    </source>
</evidence>
<evidence type="ECO:0000303" key="2">
    <source>
    </source>
</evidence>
<evidence type="ECO:0000305" key="3">
    <source>
    </source>
</evidence>
<evidence type="ECO:0007829" key="4">
    <source>
        <dbReference type="PDB" id="7XSI"/>
    </source>
</evidence>
<name>SDNG_SORAA</name>
<proteinExistence type="evidence at protein level"/>
<gene>
    <name evidence="2" type="primary">sdnG</name>
</gene>
<reference key="1">
    <citation type="journal article" date="2016" name="J. Antibiot.">
        <title>Genome mining of the sordarin biosynthetic gene cluster from Sordaria araneosa Cain ATCC 36386: characterization of cycloaraneosene synthase and GDP-6-deoxyaltrose transferase.</title>
        <authorList>
            <person name="Kudo F."/>
            <person name="Matsuura Y."/>
            <person name="Hayashi T."/>
            <person name="Fukushima M."/>
            <person name="Eguchi T."/>
        </authorList>
    </citation>
    <scope>NUCLEOTIDE SEQUENCE [GENOMIC DNA]</scope>
    <scope>FUNCTION</scope>
    <scope>PATHWAY</scope>
    <source>
        <strain>ATCC 36386 / NRRL 3196</strain>
    </source>
</reference>
<keyword id="KW-0002">3D-structure</keyword>
<keyword id="KW-0045">Antibiotic biosynthesis</keyword>
<accession>A0A1B4XBH4</accession>
<comment type="function">
    <text evidence="1">Part of the gene cluster that mediates the biosynthesis of sordarin and hypoxysordarin, glycoside antibiotics with a unique tetracyclic diterpene aglycone structure (PubMed:27072286). First, the geranylgeranyl diphosphate synthase sdnC constructs GGDP from farnesyl diphosphate and isopentenyl diphosphate (PubMed:27072286). The diterpene cyclase sdnA then catalyzes the cyclization of GGDP to afford cycloaraneosene (PubMed:27072286). Cycloaraneosene is then hydroxylated four times by the putative cytochrome P450 monooxygenases sdnB, sdnE, sdnF and sdnH to give a hydroxylated cycloaraneosene derivative such as cycloaraneosene-8,9,13,19-tetraol (PubMed:27072286). Although the order of the hydroxylations is unclear, at least C8, C9 and C13 of the cycloaraneosene skeleton are hydroxylated before the sordaricin formation (PubMed:27072286). Dehydration of the 13-hydroxy group of the hydroxylated cycloaraneosene derivative might be catalyzed by an unassigned hypothetical protein such as sdnG and sdnP to construct the cyclopentadiene moiety (PubMed:27072286). The FAD-dependent oxidoreductase sdnN is proposed to catalyze the oxidation at C9 of the hydroxylated cycloaraneosene derivative and also catalyze the Baeyer-Villiger oxidation to give the lactone intermediate (PubMed:27072286). The presumed lactone intermediate would be hydrolyzed to give an acrolein moiety and a carboxylate moiety (PubMed:27072286). Then, [4+2]cycloaddition would occur between the acrolein moiety and the cyclopentadiene moiety to give sordaricin (PubMed:27072286). SdnN might also be involved in the [4+2]cycloaddition after the hypothesized oxidation to accommodate the oxidized product and prompt the [4+2]cycloaddition (PubMed:27072286). GDP-6-deoxy-D-altrose may be biosynthesized from GDP-D-mannose by the putative GDP-mannose-4,6-dehydratase sdnI and the short-chain dehydrogenase sdnK (PubMed:27072286). The glycosyltransferase sdnJ catalyzes the attachment of 6-deoxy-D-altrose onto the 19-hydroxy group of sordaricin to give 4'-O-demethylsordarin (PubMed:27072286). The methyltransferase sdnD would complete the biosynthesis of sordarin (PubMed:27072286). Sordarin can be further modified into hypoxysordarin (PubMed:27072286). The unique acyl chain at the 3'-hydroxy group of hypoxysordarin would be constructed by an iterative type I PKS sdnO and the trans-acting polyketide methyltransferase sdnL. SdnL would be responsible for the introduction of an alpha-methyl group of the polyketide chain (PubMed:27072286). Alternatively, the beta-lactamase-like protein sdnR might be responsible for the cleavage and transfer of the polyketide chain from the PKS sdnO to sordarin (PubMed:27072286). Two putative cytochrome P450 monooxygenases, sdnQ and sdnT, might catalyze the epoxidations of the polyketide chain to complete the biosynthesis of hypoxysordarin (PubMed:27072286). Transcriptional regulators sdnM and sdnS are presumably encoded for the transcriptional regulation of the expression of the sdn gene cluster (PubMed:27072286).</text>
</comment>
<comment type="pathway">
    <text evidence="3">Antibiotic biosynthesis.</text>
</comment>
<feature type="chain" id="PRO_0000441057" description="Sordarin/hypoxysordarin biosynthesis cluster protein G">
    <location>
        <begin position="1"/>
        <end position="146"/>
    </location>
</feature>
<feature type="helix" evidence="4">
    <location>
        <begin position="9"/>
        <end position="24"/>
    </location>
</feature>
<feature type="helix" evidence="4">
    <location>
        <begin position="28"/>
        <end position="30"/>
    </location>
</feature>
<feature type="helix" evidence="4">
    <location>
        <begin position="31"/>
        <end position="34"/>
    </location>
</feature>
<feature type="strand" evidence="4">
    <location>
        <begin position="35"/>
        <end position="43"/>
    </location>
</feature>
<feature type="strand" evidence="4">
    <location>
        <begin position="46"/>
        <end position="50"/>
    </location>
</feature>
<feature type="helix" evidence="4">
    <location>
        <begin position="51"/>
        <end position="64"/>
    </location>
</feature>
<feature type="strand" evidence="4">
    <location>
        <begin position="68"/>
        <end position="79"/>
    </location>
</feature>
<feature type="strand" evidence="4">
    <location>
        <begin position="84"/>
        <end position="95"/>
    </location>
</feature>
<feature type="strand" evidence="4">
    <location>
        <begin position="98"/>
        <end position="113"/>
    </location>
</feature>
<feature type="turn" evidence="4">
    <location>
        <begin position="115"/>
        <end position="117"/>
    </location>
</feature>
<feature type="strand" evidence="4">
    <location>
        <begin position="120"/>
        <end position="127"/>
    </location>
</feature>
<feature type="helix" evidence="4">
    <location>
        <begin position="130"/>
        <end position="134"/>
    </location>
</feature>
<dbReference type="EMBL" id="LC079035">
    <property type="protein sequence ID" value="BAV32151.1"/>
    <property type="molecule type" value="Genomic_DNA"/>
</dbReference>
<dbReference type="PDB" id="7XSI">
    <property type="method" value="X-ray"/>
    <property type="resolution" value="2.70 A"/>
    <property type="chains" value="A/B/C/D/E/F/G/H=1-146"/>
</dbReference>
<dbReference type="PDBsum" id="7XSI"/>
<dbReference type="SMR" id="A0A1B4XBH4"/>
<dbReference type="GO" id="GO:0017000">
    <property type="term" value="P:antibiotic biosynthetic process"/>
    <property type="evidence" value="ECO:0007669"/>
    <property type="project" value="UniProtKB-KW"/>
</dbReference>
<dbReference type="Gene3D" id="3.10.450.50">
    <property type="match status" value="1"/>
</dbReference>
<dbReference type="InterPro" id="IPR032710">
    <property type="entry name" value="NTF2-like_dom_sf"/>
</dbReference>
<dbReference type="InterPro" id="IPR037401">
    <property type="entry name" value="SnoaL-like"/>
</dbReference>
<dbReference type="Pfam" id="PF12680">
    <property type="entry name" value="SnoaL_2"/>
    <property type="match status" value="1"/>
</dbReference>
<dbReference type="SUPFAM" id="SSF54427">
    <property type="entry name" value="NTF2-like"/>
    <property type="match status" value="1"/>
</dbReference>
<organism>
    <name type="scientific">Sordaria araneosa</name>
    <name type="common">Pleurage araneosa</name>
    <dbReference type="NCBI Taxonomy" id="573841"/>
    <lineage>
        <taxon>Eukaryota</taxon>
        <taxon>Fungi</taxon>
        <taxon>Dikarya</taxon>
        <taxon>Ascomycota</taxon>
        <taxon>Pezizomycotina</taxon>
        <taxon>Sordariomycetes</taxon>
        <taxon>Sordariomycetidae</taxon>
        <taxon>Sordariales</taxon>
        <taxon>Sordariaceae</taxon>
        <taxon>Sordaria</taxon>
    </lineage>
</organism>
<sequence length="146" mass="16193">MAGKEIQTPDQAEAFVAKVFDVLDSYDYTRFGEVLSTDLKYEGGLQKTSGLDNFINDIKASTQRMPGLQTSHSRYRTELTAEGTIYSEGHSNASLESNPGKVVTVPMIGVFKLDSEDGKIKEMRIYKDRLPFLALHQALPGMKANN</sequence>
<protein>
    <recommendedName>
        <fullName evidence="2">Sordarin/hypoxysordarin biosynthesis cluster protein G</fullName>
    </recommendedName>
</protein>